<keyword id="KW-0002">3D-structure</keyword>
<keyword id="KW-0963">Cytoplasm</keyword>
<keyword id="KW-1015">Disulfide bond</keyword>
<keyword id="KW-0676">Redox-active center</keyword>
<keyword id="KW-1185">Reference proteome</keyword>
<keyword id="KW-0804">Transcription</keyword>
<keyword id="KW-0805">Transcription regulation</keyword>
<organism>
    <name type="scientific">Streptococcus mutans serotype c (strain ATCC 700610 / UA159)</name>
    <dbReference type="NCBI Taxonomy" id="210007"/>
    <lineage>
        <taxon>Bacteria</taxon>
        <taxon>Bacillati</taxon>
        <taxon>Bacillota</taxon>
        <taxon>Bacilli</taxon>
        <taxon>Lactobacillales</taxon>
        <taxon>Streptococcaceae</taxon>
        <taxon>Streptococcus</taxon>
    </lineage>
</organism>
<gene>
    <name evidence="1" type="primary">spx</name>
    <name type="ordered locus">SMU_1142c</name>
</gene>
<sequence length="137" mass="15968">MVTLFLSPSCTSCRKARAWLNRHDVVFQEHNIMTSPLSRDELLKILSYTENGTEDIISTRSKVFQKLDIDVDELSVSELINLISKNPSLLRRPIIMDNKRMQIGFNEDEIRAFLPRDYRKQELRQATIRAEVEGEDD</sequence>
<name>SPX_STRMU</name>
<feature type="chain" id="PRO_0000162574" description="Global transcriptional regulator Spx">
    <location>
        <begin position="1"/>
        <end position="137"/>
    </location>
</feature>
<feature type="disulfide bond" description="Redox-active" evidence="1">
    <location>
        <begin position="10"/>
        <end position="13"/>
    </location>
</feature>
<feature type="strand" evidence="3">
    <location>
        <begin position="2"/>
        <end position="6"/>
    </location>
</feature>
<feature type="helix" evidence="3">
    <location>
        <begin position="11"/>
        <end position="22"/>
    </location>
</feature>
<feature type="strand" evidence="3">
    <location>
        <begin position="27"/>
        <end position="31"/>
    </location>
</feature>
<feature type="turn" evidence="3">
    <location>
        <begin position="32"/>
        <end position="34"/>
    </location>
</feature>
<feature type="helix" evidence="3">
    <location>
        <begin position="39"/>
        <end position="48"/>
    </location>
</feature>
<feature type="helix" evidence="3">
    <location>
        <begin position="53"/>
        <end position="56"/>
    </location>
</feature>
<feature type="helix" evidence="3">
    <location>
        <begin position="62"/>
        <end position="66"/>
    </location>
</feature>
<feature type="helix" evidence="3">
    <location>
        <begin position="71"/>
        <end position="73"/>
    </location>
</feature>
<feature type="helix" evidence="3">
    <location>
        <begin position="76"/>
        <end position="85"/>
    </location>
</feature>
<feature type="helix" evidence="3">
    <location>
        <begin position="87"/>
        <end position="89"/>
    </location>
</feature>
<feature type="strand" evidence="3">
    <location>
        <begin position="94"/>
        <end position="96"/>
    </location>
</feature>
<feature type="strand" evidence="3">
    <location>
        <begin position="101"/>
        <end position="104"/>
    </location>
</feature>
<feature type="helix" evidence="3">
    <location>
        <begin position="109"/>
        <end position="113"/>
    </location>
</feature>
<reference key="1">
    <citation type="journal article" date="2002" name="Proc. Natl. Acad. Sci. U.S.A.">
        <title>Genome sequence of Streptococcus mutans UA159, a cariogenic dental pathogen.</title>
        <authorList>
            <person name="Ajdic D.J."/>
            <person name="McShan W.M."/>
            <person name="McLaughlin R.E."/>
            <person name="Savic G."/>
            <person name="Chang J."/>
            <person name="Carson M.B."/>
            <person name="Primeaux C."/>
            <person name="Tian R."/>
            <person name="Kenton S."/>
            <person name="Jia H.G."/>
            <person name="Lin S.P."/>
            <person name="Qian Y."/>
            <person name="Li S."/>
            <person name="Zhu H."/>
            <person name="Najar F.Z."/>
            <person name="Lai H."/>
            <person name="White J."/>
            <person name="Roe B.A."/>
            <person name="Ferretti J.J."/>
        </authorList>
    </citation>
    <scope>NUCLEOTIDE SEQUENCE [LARGE SCALE GENOMIC DNA]</scope>
    <source>
        <strain>ATCC 700610 / UA159</strain>
    </source>
</reference>
<reference evidence="2" key="2">
    <citation type="submission" date="2009-12" db="PDB data bank">
        <title>The crystal structure of SMU.1142c from Streptococcus mutans UA159.</title>
        <authorList>
            <person name="Liu X."/>
            <person name="Fu T.M."/>
            <person name="Su X.-D."/>
        </authorList>
    </citation>
    <scope>X-RAY CRYSTALLOGRAPHY (1.90 ANGSTROMS) OF 1-120</scope>
    <source>
        <strain>ATCC 700610 / UA159</strain>
    </source>
</reference>
<protein>
    <recommendedName>
        <fullName evidence="1">Global transcriptional regulator Spx</fullName>
    </recommendedName>
</protein>
<accession>Q8DU17</accession>
<comment type="function">
    <text evidence="1">Global transcriptional regulator that plays a key role in stress response and exerts either positive or negative regulation of genes. Acts by interacting with the C-terminal domain of the alpha subunit of the RNA polymerase (RNAP). This interaction can enhance binding of RNAP to the promoter region of target genes and stimulate their transcription, or block interaction of RNAP with activator.</text>
</comment>
<comment type="subunit">
    <text evidence="1">Interacts with the C-terminal domain of the alpha subunit of the RNAP.</text>
</comment>
<comment type="subcellular location">
    <subcellularLocation>
        <location evidence="1">Cytoplasm</location>
    </subcellularLocation>
</comment>
<comment type="similarity">
    <text evidence="1">Belongs to the ArsC family. Spx subfamily.</text>
</comment>
<dbReference type="EMBL" id="AE014133">
    <property type="protein sequence ID" value="AAN58834.1"/>
    <property type="molecule type" value="Genomic_DNA"/>
</dbReference>
<dbReference type="RefSeq" id="NP_721528.1">
    <property type="nucleotide sequence ID" value="NC_004350.2"/>
</dbReference>
<dbReference type="RefSeq" id="WP_002263835.1">
    <property type="nucleotide sequence ID" value="NC_004350.2"/>
</dbReference>
<dbReference type="PDB" id="3L78">
    <property type="method" value="X-ray"/>
    <property type="resolution" value="1.90 A"/>
    <property type="chains" value="A=1-120"/>
</dbReference>
<dbReference type="PDBsum" id="3L78"/>
<dbReference type="SMR" id="Q8DU17"/>
<dbReference type="STRING" id="210007.SMU_1142c"/>
<dbReference type="GeneID" id="93859367"/>
<dbReference type="KEGG" id="smu:SMU_1142c"/>
<dbReference type="PATRIC" id="fig|210007.7.peg.1024"/>
<dbReference type="eggNOG" id="COG1393">
    <property type="taxonomic scope" value="Bacteria"/>
</dbReference>
<dbReference type="HOGENOM" id="CLU_116644_1_1_9"/>
<dbReference type="OrthoDB" id="9794155at2"/>
<dbReference type="PhylomeDB" id="Q8DU17"/>
<dbReference type="EvolutionaryTrace" id="Q8DU17"/>
<dbReference type="Proteomes" id="UP000002512">
    <property type="component" value="Chromosome"/>
</dbReference>
<dbReference type="GO" id="GO:0005737">
    <property type="term" value="C:cytoplasm"/>
    <property type="evidence" value="ECO:0007669"/>
    <property type="project" value="UniProtKB-SubCell"/>
</dbReference>
<dbReference type="GO" id="GO:0045892">
    <property type="term" value="P:negative regulation of DNA-templated transcription"/>
    <property type="evidence" value="ECO:0007669"/>
    <property type="project" value="InterPro"/>
</dbReference>
<dbReference type="CDD" id="cd03032">
    <property type="entry name" value="ArsC_Spx"/>
    <property type="match status" value="1"/>
</dbReference>
<dbReference type="Gene3D" id="3.40.30.10">
    <property type="entry name" value="Glutaredoxin"/>
    <property type="match status" value="1"/>
</dbReference>
<dbReference type="HAMAP" id="MF_01132">
    <property type="entry name" value="Spx"/>
    <property type="match status" value="1"/>
</dbReference>
<dbReference type="InterPro" id="IPR006660">
    <property type="entry name" value="Arsenate_reductase-like"/>
</dbReference>
<dbReference type="InterPro" id="IPR023731">
    <property type="entry name" value="Spx"/>
</dbReference>
<dbReference type="InterPro" id="IPR036249">
    <property type="entry name" value="Thioredoxin-like_sf"/>
</dbReference>
<dbReference type="InterPro" id="IPR006504">
    <property type="entry name" value="Tscrpt_reg_Spx/MgsR"/>
</dbReference>
<dbReference type="NCBIfam" id="TIGR01617">
    <property type="entry name" value="arsC_related"/>
    <property type="match status" value="1"/>
</dbReference>
<dbReference type="NCBIfam" id="NF002459">
    <property type="entry name" value="PRK01655.1"/>
    <property type="match status" value="1"/>
</dbReference>
<dbReference type="NCBIfam" id="NF009885">
    <property type="entry name" value="PRK13344.1"/>
    <property type="match status" value="1"/>
</dbReference>
<dbReference type="PANTHER" id="PTHR30041">
    <property type="entry name" value="ARSENATE REDUCTASE"/>
    <property type="match status" value="1"/>
</dbReference>
<dbReference type="PANTHER" id="PTHR30041:SF7">
    <property type="entry name" value="GLOBAL TRANSCRIPTIONAL REGULATOR SPX"/>
    <property type="match status" value="1"/>
</dbReference>
<dbReference type="Pfam" id="PF03960">
    <property type="entry name" value="ArsC"/>
    <property type="match status" value="1"/>
</dbReference>
<dbReference type="SUPFAM" id="SSF52833">
    <property type="entry name" value="Thioredoxin-like"/>
    <property type="match status" value="1"/>
</dbReference>
<dbReference type="PROSITE" id="PS51353">
    <property type="entry name" value="ARSC"/>
    <property type="match status" value="1"/>
</dbReference>
<evidence type="ECO:0000255" key="1">
    <source>
        <dbReference type="HAMAP-Rule" id="MF_01132"/>
    </source>
</evidence>
<evidence type="ECO:0007744" key="2">
    <source>
        <dbReference type="PDB" id="3L78"/>
    </source>
</evidence>
<evidence type="ECO:0007829" key="3">
    <source>
        <dbReference type="PDB" id="3L78"/>
    </source>
</evidence>
<proteinExistence type="evidence at protein level"/>